<sequence length="608" mass="68231">MTHSEYRDEYCGAVTESLIEQTISVVGWVHRRRDHGGVIFLDMRDRAGILQVVVDPDTPEAFATADAVRPEYVLKITGRVRRRYEGTENANMTSGHIELLAKEIEVLAKSETPPFPLNDEKSTVSEDLRLKYRYLDMRRPQMQDRMVFRAKATSAIRRYLDDHGFLDVETPILTRATPEGARDYLVPSRTRPGNFFALPQSPQLFKQLLMVAGFDRYYQIAKCFRDEDLRADRQPEFTQVDIETSFLNEEEIMNINEGLIKHVFKTMMDVEFEKFPRMTYAEAMRDYASDKPDLRIPLKLIDVADLMKDVDFKVFAGPANDPKGRVAALRIPGGASLSRKQIDAYTKFVGIYGARGLAYIKVNDASNINNGVDKESGLQSPIIKNMTDDVLVSLIERTGAESNDIIFFGADKASVVNDAIGALRQKIGLDLEMTTCEWAPLWVTDFPMFEETEDGRWTSMHHPFTKPKGSVEELKTNPESALSIAYDMVLNGTEVGGGSLRINTLEMQTAVFEALGIDDQEAEDKFGFLLDALKFGAPPHGGLAFGLDRLIMLMVGASSIRDVIAFPKTKTAECPLTQAPAEVNTKQLRELGIRVREKVQADTSKPAE</sequence>
<protein>
    <recommendedName>
        <fullName evidence="1">Aspartate--tRNA(Asp/Asn) ligase</fullName>
        <ecNumber evidence="1">6.1.1.23</ecNumber>
    </recommendedName>
    <alternativeName>
        <fullName evidence="1">Aspartyl-tRNA synthetase</fullName>
        <shortName evidence="1">AspRS</shortName>
    </alternativeName>
    <alternativeName>
        <fullName evidence="1">Non-discriminating aspartyl-tRNA synthetase</fullName>
        <shortName evidence="1">ND-AspRS</shortName>
    </alternativeName>
</protein>
<reference key="1">
    <citation type="journal article" date="2010" name="Appl. Environ. Microbiol.">
        <title>The genome sequence of Psychrobacter arcticus 273-4, a psychroactive Siberian permafrost bacterium, reveals mechanisms for adaptation to low-temperature growth.</title>
        <authorList>
            <person name="Ayala-del-Rio H.L."/>
            <person name="Chain P.S."/>
            <person name="Grzymski J.J."/>
            <person name="Ponder M.A."/>
            <person name="Ivanova N."/>
            <person name="Bergholz P.W."/>
            <person name="Di Bartolo G."/>
            <person name="Hauser L."/>
            <person name="Land M."/>
            <person name="Bakermans C."/>
            <person name="Rodrigues D."/>
            <person name="Klappenbach J."/>
            <person name="Zarka D."/>
            <person name="Larimer F."/>
            <person name="Richardson P."/>
            <person name="Murray A."/>
            <person name="Thomashow M."/>
            <person name="Tiedje J.M."/>
        </authorList>
    </citation>
    <scope>NUCLEOTIDE SEQUENCE [LARGE SCALE GENOMIC DNA]</scope>
    <source>
        <strain>DSM 17307 / VKM B-2377 / 273-4</strain>
    </source>
</reference>
<name>SYDND_PSYA2</name>
<dbReference type="EC" id="6.1.1.23" evidence="1"/>
<dbReference type="EMBL" id="CP000082">
    <property type="protein sequence ID" value="AAZ19054.1"/>
    <property type="molecule type" value="Genomic_DNA"/>
</dbReference>
<dbReference type="RefSeq" id="WP_011280476.1">
    <property type="nucleotide sequence ID" value="NC_007204.1"/>
</dbReference>
<dbReference type="SMR" id="Q4FSF4"/>
<dbReference type="STRING" id="259536.Psyc_1203"/>
<dbReference type="KEGG" id="par:Psyc_1203"/>
<dbReference type="eggNOG" id="COG0173">
    <property type="taxonomic scope" value="Bacteria"/>
</dbReference>
<dbReference type="HOGENOM" id="CLU_014330_3_2_6"/>
<dbReference type="OrthoDB" id="9802326at2"/>
<dbReference type="Proteomes" id="UP000000546">
    <property type="component" value="Chromosome"/>
</dbReference>
<dbReference type="GO" id="GO:0005737">
    <property type="term" value="C:cytoplasm"/>
    <property type="evidence" value="ECO:0007669"/>
    <property type="project" value="UniProtKB-SubCell"/>
</dbReference>
<dbReference type="GO" id="GO:0004815">
    <property type="term" value="F:aspartate-tRNA ligase activity"/>
    <property type="evidence" value="ECO:0007669"/>
    <property type="project" value="UniProtKB-UniRule"/>
</dbReference>
<dbReference type="GO" id="GO:0050560">
    <property type="term" value="F:aspartate-tRNA(Asn) ligase activity"/>
    <property type="evidence" value="ECO:0007669"/>
    <property type="project" value="UniProtKB-EC"/>
</dbReference>
<dbReference type="GO" id="GO:0005524">
    <property type="term" value="F:ATP binding"/>
    <property type="evidence" value="ECO:0007669"/>
    <property type="project" value="UniProtKB-UniRule"/>
</dbReference>
<dbReference type="GO" id="GO:0003676">
    <property type="term" value="F:nucleic acid binding"/>
    <property type="evidence" value="ECO:0007669"/>
    <property type="project" value="InterPro"/>
</dbReference>
<dbReference type="GO" id="GO:0006422">
    <property type="term" value="P:aspartyl-tRNA aminoacylation"/>
    <property type="evidence" value="ECO:0007669"/>
    <property type="project" value="UniProtKB-UniRule"/>
</dbReference>
<dbReference type="CDD" id="cd00777">
    <property type="entry name" value="AspRS_core"/>
    <property type="match status" value="1"/>
</dbReference>
<dbReference type="CDD" id="cd04317">
    <property type="entry name" value="EcAspRS_like_N"/>
    <property type="match status" value="1"/>
</dbReference>
<dbReference type="Gene3D" id="3.30.930.10">
    <property type="entry name" value="Bira Bifunctional Protein, Domain 2"/>
    <property type="match status" value="1"/>
</dbReference>
<dbReference type="Gene3D" id="3.30.1360.30">
    <property type="entry name" value="GAD-like domain"/>
    <property type="match status" value="1"/>
</dbReference>
<dbReference type="Gene3D" id="2.40.50.140">
    <property type="entry name" value="Nucleic acid-binding proteins"/>
    <property type="match status" value="1"/>
</dbReference>
<dbReference type="HAMAP" id="MF_00044">
    <property type="entry name" value="Asp_tRNA_synth_type1"/>
    <property type="match status" value="1"/>
</dbReference>
<dbReference type="InterPro" id="IPR004364">
    <property type="entry name" value="Aa-tRNA-synt_II"/>
</dbReference>
<dbReference type="InterPro" id="IPR006195">
    <property type="entry name" value="aa-tRNA-synth_II"/>
</dbReference>
<dbReference type="InterPro" id="IPR045864">
    <property type="entry name" value="aa-tRNA-synth_II/BPL/LPL"/>
</dbReference>
<dbReference type="InterPro" id="IPR004524">
    <property type="entry name" value="Asp-tRNA-ligase_1"/>
</dbReference>
<dbReference type="InterPro" id="IPR047089">
    <property type="entry name" value="Asp-tRNA-ligase_1_N"/>
</dbReference>
<dbReference type="InterPro" id="IPR002312">
    <property type="entry name" value="Asp/Asn-tRNA-synth_IIb"/>
</dbReference>
<dbReference type="InterPro" id="IPR047090">
    <property type="entry name" value="AspRS_core"/>
</dbReference>
<dbReference type="InterPro" id="IPR004115">
    <property type="entry name" value="GAD-like_sf"/>
</dbReference>
<dbReference type="InterPro" id="IPR029351">
    <property type="entry name" value="GAD_dom"/>
</dbReference>
<dbReference type="InterPro" id="IPR012340">
    <property type="entry name" value="NA-bd_OB-fold"/>
</dbReference>
<dbReference type="InterPro" id="IPR004365">
    <property type="entry name" value="NA-bd_OB_tRNA"/>
</dbReference>
<dbReference type="NCBIfam" id="TIGR00459">
    <property type="entry name" value="aspS_bact"/>
    <property type="match status" value="1"/>
</dbReference>
<dbReference type="NCBIfam" id="NF001750">
    <property type="entry name" value="PRK00476.1"/>
    <property type="match status" value="1"/>
</dbReference>
<dbReference type="PANTHER" id="PTHR22594:SF5">
    <property type="entry name" value="ASPARTATE--TRNA LIGASE, MITOCHONDRIAL"/>
    <property type="match status" value="1"/>
</dbReference>
<dbReference type="PANTHER" id="PTHR22594">
    <property type="entry name" value="ASPARTYL/LYSYL-TRNA SYNTHETASE"/>
    <property type="match status" value="1"/>
</dbReference>
<dbReference type="Pfam" id="PF02938">
    <property type="entry name" value="GAD"/>
    <property type="match status" value="1"/>
</dbReference>
<dbReference type="Pfam" id="PF00152">
    <property type="entry name" value="tRNA-synt_2"/>
    <property type="match status" value="1"/>
</dbReference>
<dbReference type="Pfam" id="PF01336">
    <property type="entry name" value="tRNA_anti-codon"/>
    <property type="match status" value="1"/>
</dbReference>
<dbReference type="PRINTS" id="PR01042">
    <property type="entry name" value="TRNASYNTHASP"/>
</dbReference>
<dbReference type="SUPFAM" id="SSF55681">
    <property type="entry name" value="Class II aaRS and biotin synthetases"/>
    <property type="match status" value="1"/>
</dbReference>
<dbReference type="SUPFAM" id="SSF55261">
    <property type="entry name" value="GAD domain-like"/>
    <property type="match status" value="1"/>
</dbReference>
<dbReference type="SUPFAM" id="SSF50249">
    <property type="entry name" value="Nucleic acid-binding proteins"/>
    <property type="match status" value="1"/>
</dbReference>
<dbReference type="PROSITE" id="PS50862">
    <property type="entry name" value="AA_TRNA_LIGASE_II"/>
    <property type="match status" value="1"/>
</dbReference>
<organism>
    <name type="scientific">Psychrobacter arcticus (strain DSM 17307 / VKM B-2377 / 273-4)</name>
    <dbReference type="NCBI Taxonomy" id="259536"/>
    <lineage>
        <taxon>Bacteria</taxon>
        <taxon>Pseudomonadati</taxon>
        <taxon>Pseudomonadota</taxon>
        <taxon>Gammaproteobacteria</taxon>
        <taxon>Moraxellales</taxon>
        <taxon>Moraxellaceae</taxon>
        <taxon>Psychrobacter</taxon>
    </lineage>
</organism>
<proteinExistence type="inferred from homology"/>
<comment type="function">
    <text evidence="1">Aspartyl-tRNA synthetase with relaxed tRNA specificity since it is able to aspartylate not only its cognate tRNA(Asp) but also tRNA(Asn). Reaction proceeds in two steps: L-aspartate is first activated by ATP to form Asp-AMP and then transferred to the acceptor end of tRNA(Asp/Asn).</text>
</comment>
<comment type="catalytic activity">
    <reaction evidence="1">
        <text>tRNA(Asx) + L-aspartate + ATP = L-aspartyl-tRNA(Asx) + AMP + diphosphate</text>
        <dbReference type="Rhea" id="RHEA:18349"/>
        <dbReference type="Rhea" id="RHEA-COMP:9710"/>
        <dbReference type="Rhea" id="RHEA-COMP:9711"/>
        <dbReference type="ChEBI" id="CHEBI:29991"/>
        <dbReference type="ChEBI" id="CHEBI:30616"/>
        <dbReference type="ChEBI" id="CHEBI:33019"/>
        <dbReference type="ChEBI" id="CHEBI:78442"/>
        <dbReference type="ChEBI" id="CHEBI:78516"/>
        <dbReference type="ChEBI" id="CHEBI:456215"/>
        <dbReference type="EC" id="6.1.1.23"/>
    </reaction>
</comment>
<comment type="subunit">
    <text evidence="1">Homodimer.</text>
</comment>
<comment type="subcellular location">
    <subcellularLocation>
        <location evidence="1">Cytoplasm</location>
    </subcellularLocation>
</comment>
<comment type="similarity">
    <text evidence="1">Belongs to the class-II aminoacyl-tRNA synthetase family. Type 1 subfamily.</text>
</comment>
<accession>Q4FSF4</accession>
<evidence type="ECO:0000255" key="1">
    <source>
        <dbReference type="HAMAP-Rule" id="MF_00044"/>
    </source>
</evidence>
<feature type="chain" id="PRO_0000235549" description="Aspartate--tRNA(Asp/Asn) ligase">
    <location>
        <begin position="1"/>
        <end position="608"/>
    </location>
</feature>
<feature type="region of interest" description="Aspartate" evidence="1">
    <location>
        <begin position="203"/>
        <end position="206"/>
    </location>
</feature>
<feature type="binding site" evidence="1">
    <location>
        <position position="179"/>
    </location>
    <ligand>
        <name>L-aspartate</name>
        <dbReference type="ChEBI" id="CHEBI:29991"/>
    </ligand>
</feature>
<feature type="binding site" evidence="1">
    <location>
        <begin position="225"/>
        <end position="227"/>
    </location>
    <ligand>
        <name>ATP</name>
        <dbReference type="ChEBI" id="CHEBI:30616"/>
    </ligand>
</feature>
<feature type="binding site" evidence="1">
    <location>
        <position position="225"/>
    </location>
    <ligand>
        <name>L-aspartate</name>
        <dbReference type="ChEBI" id="CHEBI:29991"/>
    </ligand>
</feature>
<feature type="binding site" evidence="1">
    <location>
        <position position="234"/>
    </location>
    <ligand>
        <name>ATP</name>
        <dbReference type="ChEBI" id="CHEBI:30616"/>
    </ligand>
</feature>
<feature type="binding site" evidence="1">
    <location>
        <position position="461"/>
    </location>
    <ligand>
        <name>L-aspartate</name>
        <dbReference type="ChEBI" id="CHEBI:29991"/>
    </ligand>
</feature>
<feature type="binding site" evidence="1">
    <location>
        <position position="494"/>
    </location>
    <ligand>
        <name>ATP</name>
        <dbReference type="ChEBI" id="CHEBI:30616"/>
    </ligand>
</feature>
<feature type="binding site" evidence="1">
    <location>
        <position position="501"/>
    </location>
    <ligand>
        <name>L-aspartate</name>
        <dbReference type="ChEBI" id="CHEBI:29991"/>
    </ligand>
</feature>
<feature type="binding site" evidence="1">
    <location>
        <begin position="546"/>
        <end position="549"/>
    </location>
    <ligand>
        <name>ATP</name>
        <dbReference type="ChEBI" id="CHEBI:30616"/>
    </ligand>
</feature>
<feature type="site" description="Important for tRNA non-discrimination" evidence="1">
    <location>
        <position position="35"/>
    </location>
</feature>
<feature type="site" description="Important for tRNA non-discrimination" evidence="1">
    <location>
        <position position="86"/>
    </location>
</feature>
<gene>
    <name evidence="1" type="primary">aspS</name>
    <name type="ordered locus">Psyc_1203</name>
</gene>
<keyword id="KW-0030">Aminoacyl-tRNA synthetase</keyword>
<keyword id="KW-0067">ATP-binding</keyword>
<keyword id="KW-0963">Cytoplasm</keyword>
<keyword id="KW-0436">Ligase</keyword>
<keyword id="KW-0547">Nucleotide-binding</keyword>
<keyword id="KW-0648">Protein biosynthesis</keyword>
<keyword id="KW-1185">Reference proteome</keyword>